<reference key="1">
    <citation type="submission" date="2006-08" db="EMBL/GenBank/DDBJ databases">
        <title>Complete sequence of Shewanella sp. MR-4.</title>
        <authorList>
            <consortium name="US DOE Joint Genome Institute"/>
            <person name="Copeland A."/>
            <person name="Lucas S."/>
            <person name="Lapidus A."/>
            <person name="Barry K."/>
            <person name="Detter J.C."/>
            <person name="Glavina del Rio T."/>
            <person name="Hammon N."/>
            <person name="Israni S."/>
            <person name="Dalin E."/>
            <person name="Tice H."/>
            <person name="Pitluck S."/>
            <person name="Kiss H."/>
            <person name="Brettin T."/>
            <person name="Bruce D."/>
            <person name="Han C."/>
            <person name="Tapia R."/>
            <person name="Gilna P."/>
            <person name="Schmutz J."/>
            <person name="Larimer F."/>
            <person name="Land M."/>
            <person name="Hauser L."/>
            <person name="Kyrpides N."/>
            <person name="Mikhailova N."/>
            <person name="Nealson K."/>
            <person name="Konstantinidis K."/>
            <person name="Klappenbach J."/>
            <person name="Tiedje J."/>
            <person name="Richardson P."/>
        </authorList>
    </citation>
    <scope>NUCLEOTIDE SEQUENCE [LARGE SCALE GENOMIC DNA]</scope>
    <source>
        <strain>MR-4</strain>
    </source>
</reference>
<protein>
    <recommendedName>
        <fullName evidence="1">7-cyano-7-deazaguanine synthase</fullName>
        <ecNumber evidence="1">6.3.4.20</ecNumber>
    </recommendedName>
    <alternativeName>
        <fullName evidence="1">7-cyano-7-carbaguanine synthase</fullName>
    </alternativeName>
    <alternativeName>
        <fullName evidence="1">PreQ(0) synthase</fullName>
    </alternativeName>
    <alternativeName>
        <fullName evidence="1">Queuosine biosynthesis protein QueC</fullName>
    </alternativeName>
</protein>
<sequence length="239" mass="26376">MSAASVSKVVVVFSGGQDSTTCLIQALTQFDEVHGITFDYGQRHREEIEVAKSLAKRLKITSHKVMDVSLLNELAISALTRDAIPVSHELMENGLPNTFVPGRNILFLTLAGIYAYQLGAEAIITGVCETDFSGYPDCRHDFVRAMESALVQGMDKKLEIITPLMWLNKAQTWALADKYQQLDLVRHHTLTCYNGIVGDGCGECPACHLRKRGLEDYLQNKAEVMASLDKATETGKPQT</sequence>
<feature type="chain" id="PRO_0000336949" description="7-cyano-7-deazaguanine synthase">
    <location>
        <begin position="1"/>
        <end position="239"/>
    </location>
</feature>
<feature type="binding site" evidence="1">
    <location>
        <begin position="13"/>
        <end position="23"/>
    </location>
    <ligand>
        <name>ATP</name>
        <dbReference type="ChEBI" id="CHEBI:30616"/>
    </ligand>
</feature>
<feature type="binding site" evidence="1">
    <location>
        <position position="192"/>
    </location>
    <ligand>
        <name>Zn(2+)</name>
        <dbReference type="ChEBI" id="CHEBI:29105"/>
    </ligand>
</feature>
<feature type="binding site" evidence="1">
    <location>
        <position position="201"/>
    </location>
    <ligand>
        <name>Zn(2+)</name>
        <dbReference type="ChEBI" id="CHEBI:29105"/>
    </ligand>
</feature>
<feature type="binding site" evidence="1">
    <location>
        <position position="204"/>
    </location>
    <ligand>
        <name>Zn(2+)</name>
        <dbReference type="ChEBI" id="CHEBI:29105"/>
    </ligand>
</feature>
<feature type="binding site" evidence="1">
    <location>
        <position position="207"/>
    </location>
    <ligand>
        <name>Zn(2+)</name>
        <dbReference type="ChEBI" id="CHEBI:29105"/>
    </ligand>
</feature>
<name>QUEC_SHESM</name>
<organism>
    <name type="scientific">Shewanella sp. (strain MR-4)</name>
    <dbReference type="NCBI Taxonomy" id="60480"/>
    <lineage>
        <taxon>Bacteria</taxon>
        <taxon>Pseudomonadati</taxon>
        <taxon>Pseudomonadota</taxon>
        <taxon>Gammaproteobacteria</taxon>
        <taxon>Alteromonadales</taxon>
        <taxon>Shewanellaceae</taxon>
        <taxon>Shewanella</taxon>
    </lineage>
</organism>
<accession>Q0HII5</accession>
<evidence type="ECO:0000255" key="1">
    <source>
        <dbReference type="HAMAP-Rule" id="MF_01633"/>
    </source>
</evidence>
<gene>
    <name evidence="1" type="primary">queC</name>
    <name type="ordered locus">Shewmr4_2059</name>
</gene>
<comment type="function">
    <text evidence="1">Catalyzes the ATP-dependent conversion of 7-carboxy-7-deazaguanine (CDG) to 7-cyano-7-deazaguanine (preQ(0)).</text>
</comment>
<comment type="catalytic activity">
    <reaction evidence="1">
        <text>7-carboxy-7-deazaguanine + NH4(+) + ATP = 7-cyano-7-deazaguanine + ADP + phosphate + H2O + H(+)</text>
        <dbReference type="Rhea" id="RHEA:27982"/>
        <dbReference type="ChEBI" id="CHEBI:15377"/>
        <dbReference type="ChEBI" id="CHEBI:15378"/>
        <dbReference type="ChEBI" id="CHEBI:28938"/>
        <dbReference type="ChEBI" id="CHEBI:30616"/>
        <dbReference type="ChEBI" id="CHEBI:43474"/>
        <dbReference type="ChEBI" id="CHEBI:45075"/>
        <dbReference type="ChEBI" id="CHEBI:61036"/>
        <dbReference type="ChEBI" id="CHEBI:456216"/>
        <dbReference type="EC" id="6.3.4.20"/>
    </reaction>
</comment>
<comment type="cofactor">
    <cofactor evidence="1">
        <name>Zn(2+)</name>
        <dbReference type="ChEBI" id="CHEBI:29105"/>
    </cofactor>
    <text evidence="1">Binds 1 zinc ion per subunit.</text>
</comment>
<comment type="pathway">
    <text evidence="1">Purine metabolism; 7-cyano-7-deazaguanine biosynthesis.</text>
</comment>
<comment type="similarity">
    <text evidence="1">Belongs to the QueC family.</text>
</comment>
<keyword id="KW-0067">ATP-binding</keyword>
<keyword id="KW-0436">Ligase</keyword>
<keyword id="KW-0479">Metal-binding</keyword>
<keyword id="KW-0547">Nucleotide-binding</keyword>
<keyword id="KW-0671">Queuosine biosynthesis</keyword>
<keyword id="KW-0862">Zinc</keyword>
<dbReference type="EC" id="6.3.4.20" evidence="1"/>
<dbReference type="EMBL" id="CP000446">
    <property type="protein sequence ID" value="ABI39132.1"/>
    <property type="molecule type" value="Genomic_DNA"/>
</dbReference>
<dbReference type="RefSeq" id="WP_011622822.1">
    <property type="nucleotide sequence ID" value="NC_008321.1"/>
</dbReference>
<dbReference type="SMR" id="Q0HII5"/>
<dbReference type="KEGG" id="she:Shewmr4_2059"/>
<dbReference type="HOGENOM" id="CLU_081854_0_0_6"/>
<dbReference type="UniPathway" id="UPA00391"/>
<dbReference type="GO" id="GO:0005524">
    <property type="term" value="F:ATP binding"/>
    <property type="evidence" value="ECO:0007669"/>
    <property type="project" value="UniProtKB-UniRule"/>
</dbReference>
<dbReference type="GO" id="GO:0016879">
    <property type="term" value="F:ligase activity, forming carbon-nitrogen bonds"/>
    <property type="evidence" value="ECO:0007669"/>
    <property type="project" value="UniProtKB-UniRule"/>
</dbReference>
<dbReference type="GO" id="GO:0008270">
    <property type="term" value="F:zinc ion binding"/>
    <property type="evidence" value="ECO:0007669"/>
    <property type="project" value="UniProtKB-UniRule"/>
</dbReference>
<dbReference type="GO" id="GO:0008616">
    <property type="term" value="P:queuosine biosynthetic process"/>
    <property type="evidence" value="ECO:0007669"/>
    <property type="project" value="UniProtKB-UniRule"/>
</dbReference>
<dbReference type="CDD" id="cd01995">
    <property type="entry name" value="QueC-like"/>
    <property type="match status" value="1"/>
</dbReference>
<dbReference type="FunFam" id="3.40.50.620:FF:000017">
    <property type="entry name" value="7-cyano-7-deazaguanine synthase"/>
    <property type="match status" value="1"/>
</dbReference>
<dbReference type="Gene3D" id="3.40.50.620">
    <property type="entry name" value="HUPs"/>
    <property type="match status" value="1"/>
</dbReference>
<dbReference type="HAMAP" id="MF_01633">
    <property type="entry name" value="QueC"/>
    <property type="match status" value="1"/>
</dbReference>
<dbReference type="InterPro" id="IPR018317">
    <property type="entry name" value="QueC"/>
</dbReference>
<dbReference type="InterPro" id="IPR014729">
    <property type="entry name" value="Rossmann-like_a/b/a_fold"/>
</dbReference>
<dbReference type="NCBIfam" id="TIGR00364">
    <property type="entry name" value="7-cyano-7-deazaguanine synthase QueC"/>
    <property type="match status" value="1"/>
</dbReference>
<dbReference type="NCBIfam" id="NF008317">
    <property type="entry name" value="PRK11106.1"/>
    <property type="match status" value="1"/>
</dbReference>
<dbReference type="PANTHER" id="PTHR42914">
    <property type="entry name" value="7-CYANO-7-DEAZAGUANINE SYNTHASE"/>
    <property type="match status" value="1"/>
</dbReference>
<dbReference type="PANTHER" id="PTHR42914:SF1">
    <property type="entry name" value="7-CYANO-7-DEAZAGUANINE SYNTHASE"/>
    <property type="match status" value="1"/>
</dbReference>
<dbReference type="Pfam" id="PF06508">
    <property type="entry name" value="QueC"/>
    <property type="match status" value="1"/>
</dbReference>
<dbReference type="PIRSF" id="PIRSF006293">
    <property type="entry name" value="ExsB"/>
    <property type="match status" value="1"/>
</dbReference>
<dbReference type="SUPFAM" id="SSF52402">
    <property type="entry name" value="Adenine nucleotide alpha hydrolases-like"/>
    <property type="match status" value="1"/>
</dbReference>
<proteinExistence type="inferred from homology"/>